<protein>
    <recommendedName>
        <fullName>Uncharacterized protein pXO2-80/BXB0110/GBAA_pXO2_0110</fullName>
    </recommendedName>
</protein>
<sequence length="328" mass="38140">MMDNHEVVTAIQQKTALEIEEKLGVDLDKHWENYEIQLSEDNRVIEEIHPDMRLSLGELLSVVNRCGTEKEMENFNQIADYLEPYYEAELIQEEFYDMPIAKLTTDRQQNVKVECLSEYVSNSDIAFDFNDSIFNAVNHISHSITKSHNEIMNGDVEYQGLYPINEDMVIYCESTGKPLQQDEAAYHFEGYGYVVAEEVSPEELEGKDAYYTTIGYEDVEEKRLAPIRYIEEKKIEDGELRFNPVEEIVNDHKTEAEEVFQMESAKTVSSVMKGHGAIVVQESKTTPEVARRYVGKDTVHEEEQQQISQTREQARRHYMMKQMLGRDY</sequence>
<evidence type="ECO:0000305" key="1"/>
<comment type="sequence caution" evidence="1">
    <conflict type="erroneous initiation">
        <sequence resource="EMBL-CDS" id="AAF13684"/>
    </conflict>
</comment>
<reference key="1">
    <citation type="journal article" date="1999" name="J. Appl. Microbiol.">
        <title>Sequence, assembly and analysis of pXO1 and pXO2.</title>
        <authorList>
            <person name="Okinaka R.T."/>
            <person name="Cloud K."/>
            <person name="Hampton O."/>
            <person name="Hoffmaster A."/>
            <person name="Hill K.K."/>
            <person name="Keim P."/>
            <person name="Koehler T."/>
            <person name="Lamke G."/>
            <person name="Kumano S."/>
            <person name="Manter D."/>
            <person name="Martinez Y."/>
            <person name="Ricke D."/>
            <person name="Svensson R."/>
            <person name="Jackson P.J."/>
        </authorList>
    </citation>
    <scope>NUCLEOTIDE SEQUENCE [GENOMIC DNA]</scope>
    <source>
        <strain>Pasteur</strain>
    </source>
</reference>
<reference key="2">
    <citation type="journal article" date="2002" name="Science">
        <title>Comparative genome sequencing for discovery of novel polymorphisms in Bacillus anthracis.</title>
        <authorList>
            <person name="Read T.D."/>
            <person name="Salzberg S.L."/>
            <person name="Pop M."/>
            <person name="Shumway M.F."/>
            <person name="Umayam L."/>
            <person name="Jiang L."/>
            <person name="Holtzapple E."/>
            <person name="Busch J.D."/>
            <person name="Smith K.L."/>
            <person name="Schupp J.M."/>
            <person name="Solomon D."/>
            <person name="Keim P."/>
            <person name="Fraser C.M."/>
        </authorList>
    </citation>
    <scope>NUCLEOTIDE SEQUENCE [GENOMIC DNA]</scope>
    <source>
        <strain>Ames / isolate Florida / A2012</strain>
    </source>
</reference>
<reference key="3">
    <citation type="journal article" date="2009" name="J. Bacteriol.">
        <title>The complete genome sequence of Bacillus anthracis Ames 'Ancestor'.</title>
        <authorList>
            <person name="Ravel J."/>
            <person name="Jiang L."/>
            <person name="Stanley S.T."/>
            <person name="Wilson M.R."/>
            <person name="Decker R.S."/>
            <person name="Read T.D."/>
            <person name="Worsham P."/>
            <person name="Keim P.S."/>
            <person name="Salzberg S.L."/>
            <person name="Fraser-Liggett C.M."/>
            <person name="Rasko D.A."/>
        </authorList>
    </citation>
    <scope>NUCLEOTIDE SEQUENCE [LARGE SCALE GENOMIC DNA]</scope>
    <source>
        <strain>Ames ancestor</strain>
    </source>
</reference>
<dbReference type="EMBL" id="AF188935">
    <property type="protein sequence ID" value="AAF13684.1"/>
    <property type="status" value="ALT_INIT"/>
    <property type="molecule type" value="Genomic_DNA"/>
</dbReference>
<dbReference type="EMBL" id="AE011191">
    <property type="protein sequence ID" value="AAM26260.1"/>
    <property type="molecule type" value="Genomic_DNA"/>
</dbReference>
<dbReference type="EMBL" id="AE017335">
    <property type="protein sequence ID" value="AAT35522.1"/>
    <property type="molecule type" value="Genomic_DNA"/>
</dbReference>
<dbReference type="RefSeq" id="NP_053234.1">
    <property type="nucleotide sequence ID" value="NC_002146.1"/>
</dbReference>
<dbReference type="RefSeq" id="WP_000969062.1">
    <property type="nucleotide sequence ID" value="NZ_VTZL01000009.1"/>
</dbReference>
<dbReference type="GeneID" id="45025395"/>
<dbReference type="KEGG" id="banh:HYU01_29495"/>
<dbReference type="KEGG" id="bar:GBAA_pXO2_0110"/>
<dbReference type="HOGENOM" id="CLU_073532_0_0_9"/>
<dbReference type="OMA" id="HEEHAHV"/>
<dbReference type="Proteomes" id="UP000000594">
    <property type="component" value="Plasmid pXO2"/>
</dbReference>
<geneLocation type="plasmid">
    <name>pXO2</name>
</geneLocation>
<accession>Q9RMV5</accession>
<accession>Q8KYB5</accession>
<gene>
    <name type="ordered locus">pXO2-80</name>
    <name type="ordered locus">BXB0110</name>
    <name type="ordered locus">GBAA_pXO2_0110</name>
</gene>
<feature type="chain" id="PRO_0000216864" description="Uncharacterized protein pXO2-80/BXB0110/GBAA_pXO2_0110">
    <location>
        <begin position="1"/>
        <end position="328"/>
    </location>
</feature>
<organism>
    <name type="scientific">Bacillus anthracis</name>
    <dbReference type="NCBI Taxonomy" id="1392"/>
    <lineage>
        <taxon>Bacteria</taxon>
        <taxon>Bacillati</taxon>
        <taxon>Bacillota</taxon>
        <taxon>Bacilli</taxon>
        <taxon>Bacillales</taxon>
        <taxon>Bacillaceae</taxon>
        <taxon>Bacillus</taxon>
        <taxon>Bacillus cereus group</taxon>
    </lineage>
</organism>
<keyword id="KW-0614">Plasmid</keyword>
<keyword id="KW-1185">Reference proteome</keyword>
<name>Y6610_BACAN</name>
<proteinExistence type="predicted"/>